<reference key="1">
    <citation type="journal article" date="2000" name="Science">
        <title>The genome sequence of Drosophila melanogaster.</title>
        <authorList>
            <person name="Adams M.D."/>
            <person name="Celniker S.E."/>
            <person name="Holt R.A."/>
            <person name="Evans C.A."/>
            <person name="Gocayne J.D."/>
            <person name="Amanatides P.G."/>
            <person name="Scherer S.E."/>
            <person name="Li P.W."/>
            <person name="Hoskins R.A."/>
            <person name="Galle R.F."/>
            <person name="George R.A."/>
            <person name="Lewis S.E."/>
            <person name="Richards S."/>
            <person name="Ashburner M."/>
            <person name="Henderson S.N."/>
            <person name="Sutton G.G."/>
            <person name="Wortman J.R."/>
            <person name="Yandell M.D."/>
            <person name="Zhang Q."/>
            <person name="Chen L.X."/>
            <person name="Brandon R.C."/>
            <person name="Rogers Y.-H.C."/>
            <person name="Blazej R.G."/>
            <person name="Champe M."/>
            <person name="Pfeiffer B.D."/>
            <person name="Wan K.H."/>
            <person name="Doyle C."/>
            <person name="Baxter E.G."/>
            <person name="Helt G."/>
            <person name="Nelson C.R."/>
            <person name="Miklos G.L.G."/>
            <person name="Abril J.F."/>
            <person name="Agbayani A."/>
            <person name="An H.-J."/>
            <person name="Andrews-Pfannkoch C."/>
            <person name="Baldwin D."/>
            <person name="Ballew R.M."/>
            <person name="Basu A."/>
            <person name="Baxendale J."/>
            <person name="Bayraktaroglu L."/>
            <person name="Beasley E.M."/>
            <person name="Beeson K.Y."/>
            <person name="Benos P.V."/>
            <person name="Berman B.P."/>
            <person name="Bhandari D."/>
            <person name="Bolshakov S."/>
            <person name="Borkova D."/>
            <person name="Botchan M.R."/>
            <person name="Bouck J."/>
            <person name="Brokstein P."/>
            <person name="Brottier P."/>
            <person name="Burtis K.C."/>
            <person name="Busam D.A."/>
            <person name="Butler H."/>
            <person name="Cadieu E."/>
            <person name="Center A."/>
            <person name="Chandra I."/>
            <person name="Cherry J.M."/>
            <person name="Cawley S."/>
            <person name="Dahlke C."/>
            <person name="Davenport L.B."/>
            <person name="Davies P."/>
            <person name="de Pablos B."/>
            <person name="Delcher A."/>
            <person name="Deng Z."/>
            <person name="Mays A.D."/>
            <person name="Dew I."/>
            <person name="Dietz S.M."/>
            <person name="Dodson K."/>
            <person name="Doup L.E."/>
            <person name="Downes M."/>
            <person name="Dugan-Rocha S."/>
            <person name="Dunkov B.C."/>
            <person name="Dunn P."/>
            <person name="Durbin K.J."/>
            <person name="Evangelista C.C."/>
            <person name="Ferraz C."/>
            <person name="Ferriera S."/>
            <person name="Fleischmann W."/>
            <person name="Fosler C."/>
            <person name="Gabrielian A.E."/>
            <person name="Garg N.S."/>
            <person name="Gelbart W.M."/>
            <person name="Glasser K."/>
            <person name="Glodek A."/>
            <person name="Gong F."/>
            <person name="Gorrell J.H."/>
            <person name="Gu Z."/>
            <person name="Guan P."/>
            <person name="Harris M."/>
            <person name="Harris N.L."/>
            <person name="Harvey D.A."/>
            <person name="Heiman T.J."/>
            <person name="Hernandez J.R."/>
            <person name="Houck J."/>
            <person name="Hostin D."/>
            <person name="Houston K.A."/>
            <person name="Howland T.J."/>
            <person name="Wei M.-H."/>
            <person name="Ibegwam C."/>
            <person name="Jalali M."/>
            <person name="Kalush F."/>
            <person name="Karpen G.H."/>
            <person name="Ke Z."/>
            <person name="Kennison J.A."/>
            <person name="Ketchum K.A."/>
            <person name="Kimmel B.E."/>
            <person name="Kodira C.D."/>
            <person name="Kraft C.L."/>
            <person name="Kravitz S."/>
            <person name="Kulp D."/>
            <person name="Lai Z."/>
            <person name="Lasko P."/>
            <person name="Lei Y."/>
            <person name="Levitsky A.A."/>
            <person name="Li J.H."/>
            <person name="Li Z."/>
            <person name="Liang Y."/>
            <person name="Lin X."/>
            <person name="Liu X."/>
            <person name="Mattei B."/>
            <person name="McIntosh T.C."/>
            <person name="McLeod M.P."/>
            <person name="McPherson D."/>
            <person name="Merkulov G."/>
            <person name="Milshina N.V."/>
            <person name="Mobarry C."/>
            <person name="Morris J."/>
            <person name="Moshrefi A."/>
            <person name="Mount S.M."/>
            <person name="Moy M."/>
            <person name="Murphy B."/>
            <person name="Murphy L."/>
            <person name="Muzny D.M."/>
            <person name="Nelson D.L."/>
            <person name="Nelson D.R."/>
            <person name="Nelson K.A."/>
            <person name="Nixon K."/>
            <person name="Nusskern D.R."/>
            <person name="Pacleb J.M."/>
            <person name="Palazzolo M."/>
            <person name="Pittman G.S."/>
            <person name="Pan S."/>
            <person name="Pollard J."/>
            <person name="Puri V."/>
            <person name="Reese M.G."/>
            <person name="Reinert K."/>
            <person name="Remington K."/>
            <person name="Saunders R.D.C."/>
            <person name="Scheeler F."/>
            <person name="Shen H."/>
            <person name="Shue B.C."/>
            <person name="Siden-Kiamos I."/>
            <person name="Simpson M."/>
            <person name="Skupski M.P."/>
            <person name="Smith T.J."/>
            <person name="Spier E."/>
            <person name="Spradling A.C."/>
            <person name="Stapleton M."/>
            <person name="Strong R."/>
            <person name="Sun E."/>
            <person name="Svirskas R."/>
            <person name="Tector C."/>
            <person name="Turner R."/>
            <person name="Venter E."/>
            <person name="Wang A.H."/>
            <person name="Wang X."/>
            <person name="Wang Z.-Y."/>
            <person name="Wassarman D.A."/>
            <person name="Weinstock G.M."/>
            <person name="Weissenbach J."/>
            <person name="Williams S.M."/>
            <person name="Woodage T."/>
            <person name="Worley K.C."/>
            <person name="Wu D."/>
            <person name="Yang S."/>
            <person name="Yao Q.A."/>
            <person name="Ye J."/>
            <person name="Yeh R.-F."/>
            <person name="Zaveri J.S."/>
            <person name="Zhan M."/>
            <person name="Zhang G."/>
            <person name="Zhao Q."/>
            <person name="Zheng L."/>
            <person name="Zheng X.H."/>
            <person name="Zhong F.N."/>
            <person name="Zhong W."/>
            <person name="Zhou X."/>
            <person name="Zhu S.C."/>
            <person name="Zhu X."/>
            <person name="Smith H.O."/>
            <person name="Gibbs R.A."/>
            <person name="Myers E.W."/>
            <person name="Rubin G.M."/>
            <person name="Venter J.C."/>
        </authorList>
    </citation>
    <scope>NUCLEOTIDE SEQUENCE [LARGE SCALE GENOMIC DNA]</scope>
    <source>
        <strain>Berkeley</strain>
    </source>
</reference>
<reference key="2">
    <citation type="journal article" date="2002" name="Genome Biol.">
        <title>Annotation of the Drosophila melanogaster euchromatic genome: a systematic review.</title>
        <authorList>
            <person name="Misra S."/>
            <person name="Crosby M.A."/>
            <person name="Mungall C.J."/>
            <person name="Matthews B.B."/>
            <person name="Campbell K.S."/>
            <person name="Hradecky P."/>
            <person name="Huang Y."/>
            <person name="Kaminker J.S."/>
            <person name="Millburn G.H."/>
            <person name="Prochnik S.E."/>
            <person name="Smith C.D."/>
            <person name="Tupy J.L."/>
            <person name="Whitfield E.J."/>
            <person name="Bayraktaroglu L."/>
            <person name="Berman B.P."/>
            <person name="Bettencourt B.R."/>
            <person name="Celniker S.E."/>
            <person name="de Grey A.D.N.J."/>
            <person name="Drysdale R.A."/>
            <person name="Harris N.L."/>
            <person name="Richter J."/>
            <person name="Russo S."/>
            <person name="Schroeder A.J."/>
            <person name="Shu S.Q."/>
            <person name="Stapleton M."/>
            <person name="Yamada C."/>
            <person name="Ashburner M."/>
            <person name="Gelbart W.M."/>
            <person name="Rubin G.M."/>
            <person name="Lewis S.E."/>
        </authorList>
    </citation>
    <scope>GENOME REANNOTATION</scope>
    <source>
        <strain>Berkeley</strain>
    </source>
</reference>
<reference key="3">
    <citation type="submission" date="2005-05" db="EMBL/GenBank/DDBJ databases">
        <authorList>
            <person name="Stapleton M."/>
            <person name="Carlson J.W."/>
            <person name="Chavez C."/>
            <person name="Frise E."/>
            <person name="George R.A."/>
            <person name="Pacleb J.M."/>
            <person name="Park S."/>
            <person name="Wan K.H."/>
            <person name="Yu C."/>
            <person name="Celniker S.E."/>
        </authorList>
    </citation>
    <scope>NUCLEOTIDE SEQUENCE [LARGE SCALE MRNA]</scope>
    <source>
        <strain>Berkeley</strain>
    </source>
</reference>
<proteinExistence type="evidence at transcript level"/>
<feature type="chain" id="PRO_0000086255" description="Putative mitogen-activated protein kinase kinase kinase 7-like">
    <location>
        <begin position="1"/>
        <end position="393"/>
    </location>
</feature>
<feature type="domain" description="Protein kinase" evidence="2">
    <location>
        <begin position="11"/>
        <end position="266"/>
    </location>
</feature>
<feature type="region of interest" description="Disordered" evidence="4">
    <location>
        <begin position="339"/>
        <end position="379"/>
    </location>
</feature>
<feature type="active site" description="Proton acceptor" evidence="2 3">
    <location>
        <position position="133"/>
    </location>
</feature>
<feature type="binding site" evidence="2">
    <location>
        <begin position="17"/>
        <end position="25"/>
    </location>
    <ligand>
        <name>ATP</name>
        <dbReference type="ChEBI" id="CHEBI:30616"/>
    </ligand>
</feature>
<feature type="binding site" evidence="2">
    <location>
        <position position="38"/>
    </location>
    <ligand>
        <name>ATP</name>
        <dbReference type="ChEBI" id="CHEBI:30616"/>
    </ligand>
</feature>
<sequence length="393" mass="45239">MVKQVDFAEVKLSEKFLGAGSGGAVRKATFQNQEIAVKIFDFLEETIKKNAEREITHLSEIDHENVIRVIGRASNGKKDYLLMEYLEEGSLHNYLYGDDKWEYTVEQAVRWALQCAKALAYLHSLDRPIVHRDIKPQNMLLYNQHEDLKICDFGLATDMSNNKTDMQGTLRYMAPEAIKHLKYTAKCDVYSFGIMLWELMTRQLPYSHLENPNSQYAIMKAISSGEKLPMEAVRSDCPEGIKQLMECCMDINPEKRPSMKEIEKFLGEQYESGTDEDFIKPLDEDTVAVVTYHVDSSGSRIMRVDFWRHQLPSIRMTFPIVKREAERLGKTVVREMAKAAADGDREVRRAEKDTERETSRAAHNGERETRRAGQDVGRETVRAVKKIGKKLRF</sequence>
<dbReference type="EC" id="2.7.11.25"/>
<dbReference type="EMBL" id="AE014297">
    <property type="protein sequence ID" value="AAN13830.1"/>
    <property type="molecule type" value="Genomic_DNA"/>
</dbReference>
<dbReference type="EMBL" id="BT022955">
    <property type="protein sequence ID" value="AAY55371.1"/>
    <property type="molecule type" value="mRNA"/>
</dbReference>
<dbReference type="RefSeq" id="NP_732554.1">
    <property type="nucleotide sequence ID" value="NM_169924.3"/>
</dbReference>
<dbReference type="SMR" id="P83104"/>
<dbReference type="FunCoup" id="P83104">
    <property type="interactions" value="423"/>
</dbReference>
<dbReference type="STRING" id="7227.FBpp0083400"/>
<dbReference type="PaxDb" id="7227-FBpp0083400"/>
<dbReference type="DNASU" id="318725"/>
<dbReference type="EnsemblMetazoa" id="FBtr0083996">
    <property type="protein sequence ID" value="FBpp0083400"/>
    <property type="gene ID" value="FBgn0046689"/>
</dbReference>
<dbReference type="GeneID" id="318725"/>
<dbReference type="KEGG" id="dme:Dmel_CG31421"/>
<dbReference type="AGR" id="FB:FBgn0046689"/>
<dbReference type="CTD" id="318725"/>
<dbReference type="FlyBase" id="FBgn0046689">
    <property type="gene designation" value="Takl1"/>
</dbReference>
<dbReference type="VEuPathDB" id="VectorBase:FBgn0046689"/>
<dbReference type="eggNOG" id="KOG0192">
    <property type="taxonomic scope" value="Eukaryota"/>
</dbReference>
<dbReference type="HOGENOM" id="CLU_696907_0_0_1"/>
<dbReference type="InParanoid" id="P83104"/>
<dbReference type="OMA" id="VRWALQC"/>
<dbReference type="OrthoDB" id="10261027at2759"/>
<dbReference type="PhylomeDB" id="P83104"/>
<dbReference type="BioGRID-ORCS" id="318725">
    <property type="hits" value="0 hits in 3 CRISPR screens"/>
</dbReference>
<dbReference type="GenomeRNAi" id="318725"/>
<dbReference type="PRO" id="PR:P83104"/>
<dbReference type="Proteomes" id="UP000000803">
    <property type="component" value="Chromosome 3R"/>
</dbReference>
<dbReference type="Bgee" id="FBgn0046689">
    <property type="expression patterns" value="Expressed in adult differentiating enterocyte in digestive tract and 23 other cell types or tissues"/>
</dbReference>
<dbReference type="ExpressionAtlas" id="P83104">
    <property type="expression patterns" value="baseline and differential"/>
</dbReference>
<dbReference type="GO" id="GO:0005737">
    <property type="term" value="C:cytoplasm"/>
    <property type="evidence" value="ECO:0000250"/>
    <property type="project" value="FlyBase"/>
</dbReference>
<dbReference type="GO" id="GO:0005524">
    <property type="term" value="F:ATP binding"/>
    <property type="evidence" value="ECO:0007669"/>
    <property type="project" value="UniProtKB-KW"/>
</dbReference>
<dbReference type="GO" id="GO:0019899">
    <property type="term" value="F:enzyme binding"/>
    <property type="evidence" value="ECO:0007669"/>
    <property type="project" value="UniProtKB-ARBA"/>
</dbReference>
<dbReference type="GO" id="GO:0004709">
    <property type="term" value="F:MAP kinase kinase kinase activity"/>
    <property type="evidence" value="ECO:0000318"/>
    <property type="project" value="GO_Central"/>
</dbReference>
<dbReference type="GO" id="GO:0046872">
    <property type="term" value="F:metal ion binding"/>
    <property type="evidence" value="ECO:0007669"/>
    <property type="project" value="UniProtKB-KW"/>
</dbReference>
<dbReference type="GO" id="GO:0004672">
    <property type="term" value="F:protein kinase activity"/>
    <property type="evidence" value="ECO:0000250"/>
    <property type="project" value="FlyBase"/>
</dbReference>
<dbReference type="GO" id="GO:0106310">
    <property type="term" value="F:protein serine kinase activity"/>
    <property type="evidence" value="ECO:0007669"/>
    <property type="project" value="RHEA"/>
</dbReference>
<dbReference type="GO" id="GO:0004713">
    <property type="term" value="F:protein tyrosine kinase activity"/>
    <property type="evidence" value="ECO:0007669"/>
    <property type="project" value="UniProtKB-KW"/>
</dbReference>
<dbReference type="GO" id="GO:0006955">
    <property type="term" value="P:immune response"/>
    <property type="evidence" value="ECO:0000318"/>
    <property type="project" value="GO_Central"/>
</dbReference>
<dbReference type="GO" id="GO:0007254">
    <property type="term" value="P:JNK cascade"/>
    <property type="evidence" value="ECO:0000318"/>
    <property type="project" value="GO_Central"/>
</dbReference>
<dbReference type="GO" id="GO:0043123">
    <property type="term" value="P:positive regulation of canonical NF-kappaB signal transduction"/>
    <property type="evidence" value="ECO:0000318"/>
    <property type="project" value="GO_Central"/>
</dbReference>
<dbReference type="GO" id="GO:0006950">
    <property type="term" value="P:response to stress"/>
    <property type="evidence" value="ECO:0007669"/>
    <property type="project" value="UniProtKB-ARBA"/>
</dbReference>
<dbReference type="CDD" id="cd14058">
    <property type="entry name" value="STKc_TAK1"/>
    <property type="match status" value="1"/>
</dbReference>
<dbReference type="FunFam" id="1.10.510.10:FF:002556">
    <property type="entry name" value="Putative mitogen-activated protein kinase kinase kinase 7-like"/>
    <property type="match status" value="1"/>
</dbReference>
<dbReference type="Gene3D" id="3.30.200.20">
    <property type="entry name" value="Phosphorylase Kinase, domain 1"/>
    <property type="match status" value="1"/>
</dbReference>
<dbReference type="Gene3D" id="1.10.510.10">
    <property type="entry name" value="Transferase(Phosphotransferase) domain 1"/>
    <property type="match status" value="1"/>
</dbReference>
<dbReference type="InterPro" id="IPR011009">
    <property type="entry name" value="Kinase-like_dom_sf"/>
</dbReference>
<dbReference type="InterPro" id="IPR000719">
    <property type="entry name" value="Prot_kinase_dom"/>
</dbReference>
<dbReference type="InterPro" id="IPR017441">
    <property type="entry name" value="Protein_kinase_ATP_BS"/>
</dbReference>
<dbReference type="InterPro" id="IPR001245">
    <property type="entry name" value="Ser-Thr/Tyr_kinase_cat_dom"/>
</dbReference>
<dbReference type="InterPro" id="IPR008271">
    <property type="entry name" value="Ser/Thr_kinase_AS"/>
</dbReference>
<dbReference type="PANTHER" id="PTHR46716">
    <property type="entry name" value="MITOGEN-ACTIVATED PROTEIN KINASE KINASE KINASE 7"/>
    <property type="match status" value="1"/>
</dbReference>
<dbReference type="PANTHER" id="PTHR46716:SF1">
    <property type="entry name" value="MITOGEN-ACTIVATED PROTEIN KINASE KINASE KINASE 7"/>
    <property type="match status" value="1"/>
</dbReference>
<dbReference type="Pfam" id="PF00069">
    <property type="entry name" value="Pkinase"/>
    <property type="match status" value="1"/>
</dbReference>
<dbReference type="PRINTS" id="PR00109">
    <property type="entry name" value="TYRKINASE"/>
</dbReference>
<dbReference type="SMART" id="SM00220">
    <property type="entry name" value="S_TKc"/>
    <property type="match status" value="1"/>
</dbReference>
<dbReference type="SUPFAM" id="SSF56112">
    <property type="entry name" value="Protein kinase-like (PK-like)"/>
    <property type="match status" value="1"/>
</dbReference>
<dbReference type="PROSITE" id="PS00107">
    <property type="entry name" value="PROTEIN_KINASE_ATP"/>
    <property type="match status" value="1"/>
</dbReference>
<dbReference type="PROSITE" id="PS50011">
    <property type="entry name" value="PROTEIN_KINASE_DOM"/>
    <property type="match status" value="1"/>
</dbReference>
<dbReference type="PROSITE" id="PS00108">
    <property type="entry name" value="PROTEIN_KINASE_ST"/>
    <property type="match status" value="1"/>
</dbReference>
<organism>
    <name type="scientific">Drosophila melanogaster</name>
    <name type="common">Fruit fly</name>
    <dbReference type="NCBI Taxonomy" id="7227"/>
    <lineage>
        <taxon>Eukaryota</taxon>
        <taxon>Metazoa</taxon>
        <taxon>Ecdysozoa</taxon>
        <taxon>Arthropoda</taxon>
        <taxon>Hexapoda</taxon>
        <taxon>Insecta</taxon>
        <taxon>Pterygota</taxon>
        <taxon>Neoptera</taxon>
        <taxon>Endopterygota</taxon>
        <taxon>Diptera</taxon>
        <taxon>Brachycera</taxon>
        <taxon>Muscomorpha</taxon>
        <taxon>Ephydroidea</taxon>
        <taxon>Drosophilidae</taxon>
        <taxon>Drosophila</taxon>
        <taxon>Sophophora</taxon>
    </lineage>
</organism>
<accession>P83104</accession>
<accession>Q4V4Q1</accession>
<evidence type="ECO:0000250" key="1"/>
<evidence type="ECO:0000255" key="2">
    <source>
        <dbReference type="PROSITE-ProRule" id="PRU00159"/>
    </source>
</evidence>
<evidence type="ECO:0000255" key="3">
    <source>
        <dbReference type="PROSITE-ProRule" id="PRU10027"/>
    </source>
</evidence>
<evidence type="ECO:0000256" key="4">
    <source>
        <dbReference type="SAM" id="MobiDB-lite"/>
    </source>
</evidence>
<evidence type="ECO:0000305" key="5"/>
<keyword id="KW-0067">ATP-binding</keyword>
<keyword id="KW-0418">Kinase</keyword>
<keyword id="KW-0460">Magnesium</keyword>
<keyword id="KW-0479">Metal-binding</keyword>
<keyword id="KW-0547">Nucleotide-binding</keyword>
<keyword id="KW-1185">Reference proteome</keyword>
<keyword id="KW-0723">Serine/threonine-protein kinase</keyword>
<keyword id="KW-0808">Transferase</keyword>
<keyword id="KW-0829">Tyrosine-protein kinase</keyword>
<name>M3K7L_DROME</name>
<protein>
    <recommendedName>
        <fullName>Putative mitogen-activated protein kinase kinase kinase 7-like</fullName>
        <ecNumber>2.7.11.25</ecNumber>
    </recommendedName>
</protein>
<comment type="catalytic activity">
    <reaction>
        <text>L-seryl-[protein] + ATP = O-phospho-L-seryl-[protein] + ADP + H(+)</text>
        <dbReference type="Rhea" id="RHEA:17989"/>
        <dbReference type="Rhea" id="RHEA-COMP:9863"/>
        <dbReference type="Rhea" id="RHEA-COMP:11604"/>
        <dbReference type="ChEBI" id="CHEBI:15378"/>
        <dbReference type="ChEBI" id="CHEBI:29999"/>
        <dbReference type="ChEBI" id="CHEBI:30616"/>
        <dbReference type="ChEBI" id="CHEBI:83421"/>
        <dbReference type="ChEBI" id="CHEBI:456216"/>
        <dbReference type="EC" id="2.7.11.25"/>
    </reaction>
</comment>
<comment type="catalytic activity">
    <reaction>
        <text>L-threonyl-[protein] + ATP = O-phospho-L-threonyl-[protein] + ADP + H(+)</text>
        <dbReference type="Rhea" id="RHEA:46608"/>
        <dbReference type="Rhea" id="RHEA-COMP:11060"/>
        <dbReference type="Rhea" id="RHEA-COMP:11605"/>
        <dbReference type="ChEBI" id="CHEBI:15378"/>
        <dbReference type="ChEBI" id="CHEBI:30013"/>
        <dbReference type="ChEBI" id="CHEBI:30616"/>
        <dbReference type="ChEBI" id="CHEBI:61977"/>
        <dbReference type="ChEBI" id="CHEBI:456216"/>
        <dbReference type="EC" id="2.7.11.25"/>
    </reaction>
</comment>
<comment type="cofactor">
    <cofactor evidence="1">
        <name>Mg(2+)</name>
        <dbReference type="ChEBI" id="CHEBI:18420"/>
    </cofactor>
</comment>
<comment type="similarity">
    <text evidence="5">Belongs to the protein kinase superfamily. STE Ser/Thr protein kinase family. MAP kinase kinase kinase subfamily.</text>
</comment>
<gene>
    <name type="primary">Takl1</name>
    <name type="ORF">CG31421</name>
</gene>